<feature type="signal peptide" evidence="1">
    <location>
        <begin position="1"/>
        <end position="23"/>
    </location>
</feature>
<feature type="chain" id="PRO_0000356320" description="Snaclec A4">
    <location>
        <begin position="24"/>
        <end position="156"/>
    </location>
</feature>
<feature type="domain" description="C-type lectin" evidence="3">
    <location>
        <begin position="34"/>
        <end position="155"/>
    </location>
</feature>
<feature type="glycosylation site" description="N-linked (GlcNAc...) asparagine" evidence="2">
    <location>
        <position position="45"/>
    </location>
</feature>
<feature type="disulfide bond" evidence="3">
    <location>
        <begin position="27"/>
        <end position="38"/>
    </location>
</feature>
<feature type="disulfide bond" evidence="3">
    <location>
        <begin position="55"/>
        <end position="154"/>
    </location>
</feature>
<feature type="disulfide bond" description="Interchain" evidence="3">
    <location>
        <position position="106"/>
    </location>
</feature>
<feature type="disulfide bond" evidence="3">
    <location>
        <begin position="129"/>
        <end position="146"/>
    </location>
</feature>
<accession>B4XSZ4</accession>
<organism>
    <name type="scientific">Macrovipera lebetinus</name>
    <name type="common">Levantine viper</name>
    <name type="synonym">Vipera lebetina</name>
    <dbReference type="NCBI Taxonomy" id="3148341"/>
    <lineage>
        <taxon>Eukaryota</taxon>
        <taxon>Metazoa</taxon>
        <taxon>Chordata</taxon>
        <taxon>Craniata</taxon>
        <taxon>Vertebrata</taxon>
        <taxon>Euteleostomi</taxon>
        <taxon>Lepidosauria</taxon>
        <taxon>Squamata</taxon>
        <taxon>Bifurcata</taxon>
        <taxon>Unidentata</taxon>
        <taxon>Episquamata</taxon>
        <taxon>Toxicofera</taxon>
        <taxon>Serpentes</taxon>
        <taxon>Colubroidea</taxon>
        <taxon>Viperidae</taxon>
        <taxon>Viperinae</taxon>
        <taxon>Macrovipera</taxon>
    </lineage>
</organism>
<sequence length="156" mass="17836">MGRSISVSFGLLVVFLSLSGTGADQDCLPGWSSHEGHCYKVFNLNKTWEDAKKFCTEQANSGHLVSIDSKKEANFVAELVSQNIKETRRTDFVWIGLRAEDKRQHCSSEWSDGSSINYQNWIEAESKKCLGLEKQTRYRKWVNLNCGQPYRFTCEI</sequence>
<reference key="1">
    <citation type="journal article" date="2009" name="Toxicon">
        <title>C-type lectin protein isoforms of Macrovipera lebetina: cDNA cloning and genetic diversity.</title>
        <authorList>
            <person name="Jebali J."/>
            <person name="Bazaa A."/>
            <person name="Sarray S."/>
            <person name="Benhaj K."/>
            <person name="Karboul A."/>
            <person name="El Ayeb M."/>
            <person name="Marrakchi N."/>
            <person name="Gargouri A."/>
        </authorList>
    </citation>
    <scope>NUCLEOTIDE SEQUENCE [MRNA]</scope>
</reference>
<keyword id="KW-1015">Disulfide bond</keyword>
<keyword id="KW-0325">Glycoprotein</keyword>
<keyword id="KW-1199">Hemostasis impairing toxin</keyword>
<keyword id="KW-0964">Secreted</keyword>
<keyword id="KW-0732">Signal</keyword>
<keyword id="KW-0800">Toxin</keyword>
<proteinExistence type="evidence at transcript level"/>
<dbReference type="EMBL" id="EU085456">
    <property type="protein sequence ID" value="ABW82666.1"/>
    <property type="molecule type" value="mRNA"/>
</dbReference>
<dbReference type="SMR" id="B4XSZ4"/>
<dbReference type="GO" id="GO:0005576">
    <property type="term" value="C:extracellular region"/>
    <property type="evidence" value="ECO:0007669"/>
    <property type="project" value="UniProtKB-SubCell"/>
</dbReference>
<dbReference type="GO" id="GO:0090729">
    <property type="term" value="F:toxin activity"/>
    <property type="evidence" value="ECO:0007669"/>
    <property type="project" value="UniProtKB-KW"/>
</dbReference>
<dbReference type="FunFam" id="3.10.100.10:FF:000087">
    <property type="entry name" value="Snaclec rhodocetin subunit delta"/>
    <property type="match status" value="1"/>
</dbReference>
<dbReference type="Gene3D" id="3.10.100.10">
    <property type="entry name" value="Mannose-Binding Protein A, subunit A"/>
    <property type="match status" value="1"/>
</dbReference>
<dbReference type="InterPro" id="IPR001304">
    <property type="entry name" value="C-type_lectin-like"/>
</dbReference>
<dbReference type="InterPro" id="IPR016186">
    <property type="entry name" value="C-type_lectin-like/link_sf"/>
</dbReference>
<dbReference type="InterPro" id="IPR050111">
    <property type="entry name" value="C-type_lectin/snaclec_domain"/>
</dbReference>
<dbReference type="InterPro" id="IPR018378">
    <property type="entry name" value="C-type_lectin_CS"/>
</dbReference>
<dbReference type="InterPro" id="IPR016187">
    <property type="entry name" value="CTDL_fold"/>
</dbReference>
<dbReference type="PANTHER" id="PTHR22803">
    <property type="entry name" value="MANNOSE, PHOSPHOLIPASE, LECTIN RECEPTOR RELATED"/>
    <property type="match status" value="1"/>
</dbReference>
<dbReference type="Pfam" id="PF00059">
    <property type="entry name" value="Lectin_C"/>
    <property type="match status" value="1"/>
</dbReference>
<dbReference type="SMART" id="SM00034">
    <property type="entry name" value="CLECT"/>
    <property type="match status" value="1"/>
</dbReference>
<dbReference type="SUPFAM" id="SSF56436">
    <property type="entry name" value="C-type lectin-like"/>
    <property type="match status" value="1"/>
</dbReference>
<dbReference type="PROSITE" id="PS00615">
    <property type="entry name" value="C_TYPE_LECTIN_1"/>
    <property type="match status" value="1"/>
</dbReference>
<dbReference type="PROSITE" id="PS50041">
    <property type="entry name" value="C_TYPE_LECTIN_2"/>
    <property type="match status" value="1"/>
</dbReference>
<comment type="function">
    <text evidence="1">Interferes with one step of hemostasis (modulation of platelet aggregation, or coagulation cascade, for example).</text>
</comment>
<comment type="subunit">
    <text evidence="1">Heterodimer; disulfide-linked.</text>
</comment>
<comment type="subcellular location">
    <subcellularLocation>
        <location evidence="1">Secreted</location>
    </subcellularLocation>
</comment>
<comment type="tissue specificity">
    <text>Expressed by the venom gland.</text>
</comment>
<comment type="miscellaneous">
    <text>Shows greater sequence similarity to the alpha than beta subunits compared to other heterodimer snaclecs.</text>
</comment>
<comment type="similarity">
    <text evidence="4">Belongs to the snaclec family.</text>
</comment>
<evidence type="ECO:0000250" key="1"/>
<evidence type="ECO:0000255" key="2"/>
<evidence type="ECO:0000255" key="3">
    <source>
        <dbReference type="PROSITE-ProRule" id="PRU00040"/>
    </source>
</evidence>
<evidence type="ECO:0000305" key="4"/>
<protein>
    <recommendedName>
        <fullName>Snaclec A4</fullName>
    </recommendedName>
    <alternativeName>
        <fullName>C-type lectin A4</fullName>
    </alternativeName>
</protein>
<name>SLA4_MACLB</name>